<comment type="function">
    <text evidence="1">Component of the cytochrome b6-f complex, which mediates electron transfer between photosystem II (PSII) and photosystem I (PSI), cyclic electron flow around PSI, and state transitions. PetL is important for photoautotrophic growth as well as for electron transfer efficiency and stability of the cytochrome b6-f complex.</text>
</comment>
<comment type="subunit">
    <text evidence="1">The 4 large subunits of the cytochrome b6-f complex are cytochrome b6, subunit IV (17 kDa polypeptide, PetD), cytochrome f and the Rieske protein, while the 4 small subunits are PetG, PetL, PetM and PetN. The complex functions as a dimer.</text>
</comment>
<comment type="subcellular location">
    <subcellularLocation>
        <location evidence="1">Plastid</location>
        <location evidence="1">Chloroplast thylakoid membrane</location>
        <topology evidence="1">Single-pass membrane protein</topology>
    </subcellularLocation>
</comment>
<comment type="similarity">
    <text evidence="1">Belongs to the PetL family.</text>
</comment>
<evidence type="ECO:0000255" key="1">
    <source>
        <dbReference type="HAMAP-Rule" id="MF_00433"/>
    </source>
</evidence>
<keyword id="KW-0150">Chloroplast</keyword>
<keyword id="KW-0249">Electron transport</keyword>
<keyword id="KW-0472">Membrane</keyword>
<keyword id="KW-0602">Photosynthesis</keyword>
<keyword id="KW-0934">Plastid</keyword>
<keyword id="KW-0793">Thylakoid</keyword>
<keyword id="KW-0812">Transmembrane</keyword>
<keyword id="KW-1133">Transmembrane helix</keyword>
<keyword id="KW-0813">Transport</keyword>
<organism>
    <name type="scientific">Capsella bursa-pastoris</name>
    <name type="common">Shepherd's purse</name>
    <name type="synonym">Thlaspi bursa-pastoris</name>
    <dbReference type="NCBI Taxonomy" id="3719"/>
    <lineage>
        <taxon>Eukaryota</taxon>
        <taxon>Viridiplantae</taxon>
        <taxon>Streptophyta</taxon>
        <taxon>Embryophyta</taxon>
        <taxon>Tracheophyta</taxon>
        <taxon>Spermatophyta</taxon>
        <taxon>Magnoliopsida</taxon>
        <taxon>eudicotyledons</taxon>
        <taxon>Gunneridae</taxon>
        <taxon>Pentapetalae</taxon>
        <taxon>rosids</taxon>
        <taxon>malvids</taxon>
        <taxon>Brassicales</taxon>
        <taxon>Brassicaceae</taxon>
        <taxon>Camelineae</taxon>
        <taxon>Capsella</taxon>
    </lineage>
</organism>
<dbReference type="EMBL" id="AP009371">
    <property type="protein sequence ID" value="BAF50215.1"/>
    <property type="molecule type" value="Genomic_DNA"/>
</dbReference>
<dbReference type="RefSeq" id="YP_001123391.1">
    <property type="nucleotide sequence ID" value="NC_009270.1"/>
</dbReference>
<dbReference type="SMR" id="A4QKL0"/>
<dbReference type="GeneID" id="4961707"/>
<dbReference type="GO" id="GO:0009535">
    <property type="term" value="C:chloroplast thylakoid membrane"/>
    <property type="evidence" value="ECO:0007669"/>
    <property type="project" value="UniProtKB-SubCell"/>
</dbReference>
<dbReference type="GO" id="GO:0009512">
    <property type="term" value="C:cytochrome b6f complex"/>
    <property type="evidence" value="ECO:0007669"/>
    <property type="project" value="InterPro"/>
</dbReference>
<dbReference type="GO" id="GO:0045158">
    <property type="term" value="F:electron transporter, transferring electrons within cytochrome b6/f complex of photosystem II activity"/>
    <property type="evidence" value="ECO:0007669"/>
    <property type="project" value="UniProtKB-UniRule"/>
</dbReference>
<dbReference type="GO" id="GO:0015979">
    <property type="term" value="P:photosynthesis"/>
    <property type="evidence" value="ECO:0007669"/>
    <property type="project" value="UniProtKB-KW"/>
</dbReference>
<dbReference type="HAMAP" id="MF_00433">
    <property type="entry name" value="Cytb6_f_PetL"/>
    <property type="match status" value="1"/>
</dbReference>
<dbReference type="InterPro" id="IPR007802">
    <property type="entry name" value="Cyt_b6/f_cplx_su6"/>
</dbReference>
<dbReference type="PANTHER" id="PTHR37266">
    <property type="entry name" value="CYTOCHROME B6-F COMPLEX SUBUNIT 6"/>
    <property type="match status" value="1"/>
</dbReference>
<dbReference type="PANTHER" id="PTHR37266:SF1">
    <property type="entry name" value="CYTOCHROME B6-F COMPLEX SUBUNIT 6"/>
    <property type="match status" value="1"/>
</dbReference>
<dbReference type="Pfam" id="PF05115">
    <property type="entry name" value="PetL"/>
    <property type="match status" value="1"/>
</dbReference>
<protein>
    <recommendedName>
        <fullName evidence="1">Cytochrome b6-f complex subunit 6</fullName>
    </recommendedName>
    <alternativeName>
        <fullName evidence="1">Cytochrome b6-f complex subunit PetL</fullName>
    </alternativeName>
    <alternativeName>
        <fullName evidence="1">Cytochrome b6-f complex subunit VI</fullName>
    </alternativeName>
</protein>
<name>PETL_CAPBU</name>
<gene>
    <name evidence="1" type="primary">petL</name>
</gene>
<accession>A4QKL0</accession>
<proteinExistence type="inferred from homology"/>
<feature type="chain" id="PRO_0000300137" description="Cytochrome b6-f complex subunit 6">
    <location>
        <begin position="1"/>
        <end position="31"/>
    </location>
</feature>
<feature type="transmembrane region" description="Helical" evidence="1">
    <location>
        <begin position="4"/>
        <end position="24"/>
    </location>
</feature>
<sequence length="31" mass="3401">MPTITSYFGFLLAALTITSVLFIGLSKIRLI</sequence>
<geneLocation type="chloroplast"/>
<reference key="1">
    <citation type="submission" date="2007-03" db="EMBL/GenBank/DDBJ databases">
        <title>Sequencing analysis of Capsella bursa-pastoris JO22 chloroplast DNA.</title>
        <authorList>
            <person name="Hosouchi T."/>
            <person name="Tsuruoka H."/>
            <person name="Kotani H."/>
        </authorList>
    </citation>
    <scope>NUCLEOTIDE SEQUENCE [LARGE SCALE GENOMIC DNA]</scope>
</reference>